<name>TBB_ENTDO</name>
<keyword id="KW-0963">Cytoplasm</keyword>
<keyword id="KW-0206">Cytoskeleton</keyword>
<keyword id="KW-0342">GTP-binding</keyword>
<keyword id="KW-0460">Magnesium</keyword>
<keyword id="KW-0479">Metal-binding</keyword>
<keyword id="KW-0493">Microtubule</keyword>
<keyword id="KW-0547">Nucleotide-binding</keyword>
<feature type="chain" id="PRO_0000048304" description="Tubulin beta chain">
    <location>
        <begin position="1"/>
        <end position="447"/>
    </location>
</feature>
<feature type="region of interest" description="Disordered" evidence="3">
    <location>
        <begin position="424"/>
        <end position="447"/>
    </location>
</feature>
<feature type="compositionally biased region" description="Acidic residues" evidence="3">
    <location>
        <begin position="433"/>
        <end position="447"/>
    </location>
</feature>
<feature type="binding site" evidence="2">
    <location>
        <position position="11"/>
    </location>
    <ligand>
        <name>GTP</name>
        <dbReference type="ChEBI" id="CHEBI:37565"/>
    </ligand>
</feature>
<feature type="binding site" evidence="1">
    <location>
        <position position="69"/>
    </location>
    <ligand>
        <name>GTP</name>
        <dbReference type="ChEBI" id="CHEBI:37565"/>
    </ligand>
</feature>
<feature type="binding site" evidence="1">
    <location>
        <position position="69"/>
    </location>
    <ligand>
        <name>Mg(2+)</name>
        <dbReference type="ChEBI" id="CHEBI:18420"/>
    </ligand>
</feature>
<feature type="binding site" evidence="2">
    <location>
        <position position="138"/>
    </location>
    <ligand>
        <name>GTP</name>
        <dbReference type="ChEBI" id="CHEBI:37565"/>
    </ligand>
</feature>
<feature type="binding site" evidence="2">
    <location>
        <position position="142"/>
    </location>
    <ligand>
        <name>GTP</name>
        <dbReference type="ChEBI" id="CHEBI:37565"/>
    </ligand>
</feature>
<feature type="binding site" evidence="2">
    <location>
        <position position="143"/>
    </location>
    <ligand>
        <name>GTP</name>
        <dbReference type="ChEBI" id="CHEBI:37565"/>
    </ligand>
</feature>
<feature type="binding site" evidence="2">
    <location>
        <position position="144"/>
    </location>
    <ligand>
        <name>GTP</name>
        <dbReference type="ChEBI" id="CHEBI:37565"/>
    </ligand>
</feature>
<feature type="binding site" evidence="2">
    <location>
        <position position="204"/>
    </location>
    <ligand>
        <name>GTP</name>
        <dbReference type="ChEBI" id="CHEBI:37565"/>
    </ligand>
</feature>
<feature type="binding site" evidence="2">
    <location>
        <position position="226"/>
    </location>
    <ligand>
        <name>GTP</name>
        <dbReference type="ChEBI" id="CHEBI:37565"/>
    </ligand>
</feature>
<accession>P35394</accession>
<proteinExistence type="evidence at transcript level"/>
<evidence type="ECO:0000250" key="1">
    <source>
        <dbReference type="UniProtKB" id="P68363"/>
    </source>
</evidence>
<evidence type="ECO:0000250" key="2">
    <source>
        <dbReference type="UniProtKB" id="Q13509"/>
    </source>
</evidence>
<evidence type="ECO:0000256" key="3">
    <source>
        <dbReference type="SAM" id="MobiDB-lite"/>
    </source>
</evidence>
<evidence type="ECO:0000305" key="4"/>
<protein>
    <recommendedName>
        <fullName>Tubulin beta chain</fullName>
    </recommendedName>
    <alternativeName>
        <fullName>Beta-tubulin</fullName>
    </alternativeName>
</protein>
<dbReference type="EMBL" id="L10111">
    <property type="protein sequence ID" value="AAA16611.1"/>
    <property type="molecule type" value="mRNA"/>
</dbReference>
<dbReference type="PIR" id="S43426">
    <property type="entry name" value="S43426"/>
</dbReference>
<dbReference type="SMR" id="P35394"/>
<dbReference type="GO" id="GO:0005737">
    <property type="term" value="C:cytoplasm"/>
    <property type="evidence" value="ECO:0007669"/>
    <property type="project" value="UniProtKB-KW"/>
</dbReference>
<dbReference type="GO" id="GO:0005874">
    <property type="term" value="C:microtubule"/>
    <property type="evidence" value="ECO:0007669"/>
    <property type="project" value="UniProtKB-KW"/>
</dbReference>
<dbReference type="GO" id="GO:0005525">
    <property type="term" value="F:GTP binding"/>
    <property type="evidence" value="ECO:0007669"/>
    <property type="project" value="UniProtKB-KW"/>
</dbReference>
<dbReference type="GO" id="GO:0003924">
    <property type="term" value="F:GTPase activity"/>
    <property type="evidence" value="ECO:0007669"/>
    <property type="project" value="InterPro"/>
</dbReference>
<dbReference type="GO" id="GO:0046872">
    <property type="term" value="F:metal ion binding"/>
    <property type="evidence" value="ECO:0007669"/>
    <property type="project" value="UniProtKB-KW"/>
</dbReference>
<dbReference type="GO" id="GO:0005200">
    <property type="term" value="F:structural constituent of cytoskeleton"/>
    <property type="evidence" value="ECO:0007669"/>
    <property type="project" value="InterPro"/>
</dbReference>
<dbReference type="GO" id="GO:0007017">
    <property type="term" value="P:microtubule-based process"/>
    <property type="evidence" value="ECO:0007669"/>
    <property type="project" value="InterPro"/>
</dbReference>
<dbReference type="CDD" id="cd02187">
    <property type="entry name" value="beta_tubulin"/>
    <property type="match status" value="1"/>
</dbReference>
<dbReference type="FunFam" id="1.10.287.600:FF:000013">
    <property type="entry name" value="Tubulin beta chain"/>
    <property type="match status" value="1"/>
</dbReference>
<dbReference type="FunFam" id="3.30.1330.20:FF:000002">
    <property type="entry name" value="Tubulin beta chain"/>
    <property type="match status" value="1"/>
</dbReference>
<dbReference type="FunFam" id="3.40.50.1440:FF:000003">
    <property type="entry name" value="Tubulin beta chain"/>
    <property type="match status" value="1"/>
</dbReference>
<dbReference type="Gene3D" id="1.10.287.600">
    <property type="entry name" value="Helix hairpin bin"/>
    <property type="match status" value="1"/>
</dbReference>
<dbReference type="Gene3D" id="3.30.1330.20">
    <property type="entry name" value="Tubulin/FtsZ, C-terminal domain"/>
    <property type="match status" value="1"/>
</dbReference>
<dbReference type="Gene3D" id="3.40.50.1440">
    <property type="entry name" value="Tubulin/FtsZ, GTPase domain"/>
    <property type="match status" value="1"/>
</dbReference>
<dbReference type="InterPro" id="IPR013838">
    <property type="entry name" value="Beta-tubulin_BS"/>
</dbReference>
<dbReference type="InterPro" id="IPR002453">
    <property type="entry name" value="Beta_tubulin"/>
</dbReference>
<dbReference type="InterPro" id="IPR008280">
    <property type="entry name" value="Tub_FtsZ_C"/>
</dbReference>
<dbReference type="InterPro" id="IPR000217">
    <property type="entry name" value="Tubulin"/>
</dbReference>
<dbReference type="InterPro" id="IPR037103">
    <property type="entry name" value="Tubulin/FtsZ-like_C"/>
</dbReference>
<dbReference type="InterPro" id="IPR018316">
    <property type="entry name" value="Tubulin/FtsZ_2-layer-sand-dom"/>
</dbReference>
<dbReference type="InterPro" id="IPR036525">
    <property type="entry name" value="Tubulin/FtsZ_GTPase_sf"/>
</dbReference>
<dbReference type="InterPro" id="IPR023123">
    <property type="entry name" value="Tubulin_C"/>
</dbReference>
<dbReference type="InterPro" id="IPR017975">
    <property type="entry name" value="Tubulin_CS"/>
</dbReference>
<dbReference type="InterPro" id="IPR003008">
    <property type="entry name" value="Tubulin_FtsZ_GTPase"/>
</dbReference>
<dbReference type="PANTHER" id="PTHR11588">
    <property type="entry name" value="TUBULIN"/>
    <property type="match status" value="1"/>
</dbReference>
<dbReference type="Pfam" id="PF00091">
    <property type="entry name" value="Tubulin"/>
    <property type="match status" value="1"/>
</dbReference>
<dbReference type="Pfam" id="PF03953">
    <property type="entry name" value="Tubulin_C"/>
    <property type="match status" value="1"/>
</dbReference>
<dbReference type="PRINTS" id="PR01163">
    <property type="entry name" value="BETATUBULIN"/>
</dbReference>
<dbReference type="PRINTS" id="PR01161">
    <property type="entry name" value="TUBULIN"/>
</dbReference>
<dbReference type="SMART" id="SM00864">
    <property type="entry name" value="Tubulin"/>
    <property type="match status" value="1"/>
</dbReference>
<dbReference type="SMART" id="SM00865">
    <property type="entry name" value="Tubulin_C"/>
    <property type="match status" value="1"/>
</dbReference>
<dbReference type="SUPFAM" id="SSF55307">
    <property type="entry name" value="Tubulin C-terminal domain-like"/>
    <property type="match status" value="1"/>
</dbReference>
<dbReference type="SUPFAM" id="SSF52490">
    <property type="entry name" value="Tubulin nucleotide-binding domain-like"/>
    <property type="match status" value="1"/>
</dbReference>
<dbReference type="PROSITE" id="PS00227">
    <property type="entry name" value="TUBULIN"/>
    <property type="match status" value="1"/>
</dbReference>
<dbReference type="PROSITE" id="PS00228">
    <property type="entry name" value="TUBULIN_B_AUTOREG"/>
    <property type="match status" value="1"/>
</dbReference>
<comment type="function">
    <text>Tubulin is the major constituent of microtubules, a cylinder consisting of laterally associated linear protofilaments composed of alpha- and beta-tubulin heterodimers. Microtubules grow by the addition of GTP-tubulin dimers to the microtubule end, where a stabilizing cap forms. Below the cap, tubulin dimers are in GDP-bound state, owing to GTPase activity of alpha-tubulin.</text>
</comment>
<comment type="cofactor">
    <cofactor evidence="1">
        <name>Mg(2+)</name>
        <dbReference type="ChEBI" id="CHEBI:18420"/>
    </cofactor>
</comment>
<comment type="subunit">
    <text>Dimer of alpha and beta chains. A typical microtubule is a hollow water-filled tube with an outer diameter of 25 nm and an inner diameter of 15 nM. Alpha-beta heterodimers associate head-to-tail to form protofilaments running lengthwise along the microtubule wall with the beta-tubulin subunit facing the microtubule plus end conferring a structural polarity. Microtubules usually have 13 protofilaments but different protofilament numbers can be found in some organisms and specialized cells.</text>
</comment>
<comment type="subcellular location">
    <subcellularLocation>
        <location>Cytoplasm</location>
        <location>Cytoskeleton</location>
    </subcellularLocation>
</comment>
<comment type="tissue specificity">
    <text>Lens specific.</text>
</comment>
<comment type="similarity">
    <text evidence="4">Belongs to the tubulin family.</text>
</comment>
<sequence>MREIVHIQAGQCGNQIGSKFWEVISEEHGIDPSGVYQGKLSTQLERSYVYFNEASSGKYVPRAVLLDLEPGTMDSVRSGPYGSLFRPDNYVFGQSGAGNNWAKGHYTEGAELVDTVLDVIRKECEGCECIQGFQMTHSLGGGTGAGMGTLLISKYREEYPDRIMTTFSVMPSPKVSDTVVEPYNATLSIHQLVENTDETFCIDNEALYDISLRTLKLPNPTYGDLNHLVSATMSGVTTCLRFPGQLNADLRKLAVNMVPFPRLHFFMPGFAPLTSRGSQDYRMHSVSDLTQQLFDAKNMMTACDPRHGRYLTVAAVFRGKMSMKEVDEQMFSIQNKMSPYFVEWIPNNVKTAVCDIPPTGLEMSATFIGNSTAIQEIFKRISEQFTAMFRRKAFLHWYTGEGMDEMEFTEAESNMNDLVSEYQQYQEARSTDSDEYDNEEYYNQQEE</sequence>
<organism>
    <name type="scientific">Enteroctopus dofleini</name>
    <name type="common">North Pacific giant octopus</name>
    <name type="synonym">Octopus dofleini</name>
    <dbReference type="NCBI Taxonomy" id="267067"/>
    <lineage>
        <taxon>Eukaryota</taxon>
        <taxon>Metazoa</taxon>
        <taxon>Spiralia</taxon>
        <taxon>Lophotrochozoa</taxon>
        <taxon>Mollusca</taxon>
        <taxon>Cephalopoda</taxon>
        <taxon>Coleoidea</taxon>
        <taxon>Octopodiformes</taxon>
        <taxon>Octopoda</taxon>
        <taxon>Incirrata</taxon>
        <taxon>Octopodidae</taxon>
        <taxon>Enteroctopus</taxon>
    </lineage>
</organism>
<reference key="1">
    <citation type="journal article" date="1993" name="Biochim. Biophys. Acta">
        <title>Primary structure and lens-specific expression of genes for an intermediate filament protein and a beta-tubulin in cephalopods.</title>
        <authorList>
            <person name="Tomarev S.I."/>
            <person name="Zinovieva R.D."/>
            <person name="Piatigorsky J."/>
        </authorList>
    </citation>
    <scope>NUCLEOTIDE SEQUENCE [MRNA]</scope>
    <source>
        <tissue>Lens</tissue>
    </source>
</reference>